<organism>
    <name type="scientific">Methanothrix thermoacetophila (strain DSM 6194 / JCM 14653 / NBRC 101360 / PT)</name>
    <name type="common">Methanosaeta thermophila</name>
    <dbReference type="NCBI Taxonomy" id="349307"/>
    <lineage>
        <taxon>Archaea</taxon>
        <taxon>Methanobacteriati</taxon>
        <taxon>Methanobacteriota</taxon>
        <taxon>Stenosarchaea group</taxon>
        <taxon>Methanomicrobia</taxon>
        <taxon>Methanotrichales</taxon>
        <taxon>Methanotrichaceae</taxon>
        <taxon>Methanothrix</taxon>
    </lineage>
</organism>
<proteinExistence type="inferred from homology"/>
<keyword id="KW-0324">Glycolysis</keyword>
<keyword id="KW-0413">Isomerase</keyword>
<keyword id="KW-1185">Reference proteome</keyword>
<sequence length="392" mass="42413">MKYVVLLGDGMADWPMEALGGRTPLQVARKPNMDSIARIGRCGLARTVPEGMTPGSDVANLSIMGYDPRRYYTGRAPLEAAAMRIPLGEKEVAFRCNFVTVMDGIMDDYSAGHITSEEGAEIAESLKKVIPGGRIYPGVSYRNIVVLKVCRDAVCTPPHDIMGKPISDHLPRGDDAHILIDIMERARPLLEEHPVNRRRVSMGLKPANMIWLWGQGPAPSMPRFHEIYGLKGAVISAVDLLKGLGVCAGWRVIDVPGATGTIDTNYAGKVRAALEALGSVDLVYLHIEAPDEAAHSGDVEQKIRAIELFDERVVGPMIHGLERSGEAWRVLLLPDHPTPIEIRTHSTDPVPFAIAGSGVCVDSVDAFDEISASEGGYGMIEGNDLIRLLIAG</sequence>
<comment type="function">
    <text evidence="1">Catalyzes the interconversion of 2-phosphoglycerate and 3-phosphoglycerate.</text>
</comment>
<comment type="catalytic activity">
    <reaction evidence="1">
        <text>(2R)-2-phosphoglycerate = (2R)-3-phosphoglycerate</text>
        <dbReference type="Rhea" id="RHEA:15901"/>
        <dbReference type="ChEBI" id="CHEBI:58272"/>
        <dbReference type="ChEBI" id="CHEBI:58289"/>
        <dbReference type="EC" id="5.4.2.12"/>
    </reaction>
</comment>
<comment type="pathway">
    <text evidence="1">Carbohydrate degradation; glycolysis; pyruvate from D-glyceraldehyde 3-phosphate: step 3/5.</text>
</comment>
<comment type="similarity">
    <text evidence="1">Belongs to the BPG-independent phosphoglycerate mutase family. A-PGAM subfamily.</text>
</comment>
<dbReference type="EC" id="5.4.2.12" evidence="1"/>
<dbReference type="EMBL" id="CP000477">
    <property type="protein sequence ID" value="ABK14336.1"/>
    <property type="molecule type" value="Genomic_DNA"/>
</dbReference>
<dbReference type="RefSeq" id="WP_011695733.1">
    <property type="nucleotide sequence ID" value="NC_008553.1"/>
</dbReference>
<dbReference type="SMR" id="A0B6L2"/>
<dbReference type="STRING" id="349307.Mthe_0545"/>
<dbReference type="GeneID" id="4463005"/>
<dbReference type="KEGG" id="mtp:Mthe_0545"/>
<dbReference type="HOGENOM" id="CLU_034906_2_0_2"/>
<dbReference type="OrthoDB" id="52918at2157"/>
<dbReference type="UniPathway" id="UPA00109">
    <property type="reaction ID" value="UER00186"/>
</dbReference>
<dbReference type="Proteomes" id="UP000000674">
    <property type="component" value="Chromosome"/>
</dbReference>
<dbReference type="GO" id="GO:0046872">
    <property type="term" value="F:metal ion binding"/>
    <property type="evidence" value="ECO:0007669"/>
    <property type="project" value="InterPro"/>
</dbReference>
<dbReference type="GO" id="GO:0004619">
    <property type="term" value="F:phosphoglycerate mutase activity"/>
    <property type="evidence" value="ECO:0007669"/>
    <property type="project" value="UniProtKB-EC"/>
</dbReference>
<dbReference type="GO" id="GO:0006096">
    <property type="term" value="P:glycolytic process"/>
    <property type="evidence" value="ECO:0007669"/>
    <property type="project" value="UniProtKB-UniRule"/>
</dbReference>
<dbReference type="CDD" id="cd16011">
    <property type="entry name" value="iPGM_like"/>
    <property type="match status" value="1"/>
</dbReference>
<dbReference type="Gene3D" id="3.40.720.10">
    <property type="entry name" value="Alkaline Phosphatase, subunit A"/>
    <property type="match status" value="2"/>
</dbReference>
<dbReference type="HAMAP" id="MF_01402_A">
    <property type="entry name" value="ApgM_A"/>
    <property type="match status" value="1"/>
</dbReference>
<dbReference type="InterPro" id="IPR017850">
    <property type="entry name" value="Alkaline_phosphatase_core_sf"/>
</dbReference>
<dbReference type="InterPro" id="IPR023665">
    <property type="entry name" value="ApgAM_prokaryotes"/>
</dbReference>
<dbReference type="InterPro" id="IPR006124">
    <property type="entry name" value="Metalloenzyme"/>
</dbReference>
<dbReference type="InterPro" id="IPR004456">
    <property type="entry name" value="Pglycerate_mutase_ApgM"/>
</dbReference>
<dbReference type="NCBIfam" id="TIGR00306">
    <property type="entry name" value="apgM"/>
    <property type="match status" value="1"/>
</dbReference>
<dbReference type="NCBIfam" id="TIGR02535">
    <property type="entry name" value="hyp_Hser_kinase"/>
    <property type="match status" value="1"/>
</dbReference>
<dbReference type="NCBIfam" id="NF003242">
    <property type="entry name" value="PRK04200.1"/>
    <property type="match status" value="1"/>
</dbReference>
<dbReference type="PANTHER" id="PTHR31209:SF4">
    <property type="entry name" value="2,3-BISPHOSPHOGLYCERATE-INDEPENDENT PHOSPHOGLYCERATE MUTASE"/>
    <property type="match status" value="1"/>
</dbReference>
<dbReference type="PANTHER" id="PTHR31209">
    <property type="entry name" value="COFACTOR-INDEPENDENT PHOSPHOGLYCERATE MUTASE"/>
    <property type="match status" value="1"/>
</dbReference>
<dbReference type="Pfam" id="PF01676">
    <property type="entry name" value="Metalloenzyme"/>
    <property type="match status" value="1"/>
</dbReference>
<dbReference type="Pfam" id="PF10143">
    <property type="entry name" value="PhosphMutase"/>
    <property type="match status" value="1"/>
</dbReference>
<dbReference type="PIRSF" id="PIRSF006392">
    <property type="entry name" value="IPGAM_arch"/>
    <property type="match status" value="1"/>
</dbReference>
<dbReference type="SUPFAM" id="SSF53649">
    <property type="entry name" value="Alkaline phosphatase-like"/>
    <property type="match status" value="1"/>
</dbReference>
<evidence type="ECO:0000255" key="1">
    <source>
        <dbReference type="HAMAP-Rule" id="MF_01402"/>
    </source>
</evidence>
<name>APGM_METTP</name>
<protein>
    <recommendedName>
        <fullName evidence="1">2,3-bisphosphoglycerate-independent phosphoglycerate mutase</fullName>
        <shortName evidence="1">BPG-independent PGAM</shortName>
        <shortName evidence="1">Phosphoglyceromutase</shortName>
        <shortName evidence="1">aPGAM</shortName>
        <ecNumber evidence="1">5.4.2.12</ecNumber>
    </recommendedName>
</protein>
<feature type="chain" id="PRO_1000068384" description="2,3-bisphosphoglycerate-independent phosphoglycerate mutase">
    <location>
        <begin position="1"/>
        <end position="392"/>
    </location>
</feature>
<accession>A0B6L2</accession>
<gene>
    <name evidence="1" type="primary">apgM</name>
    <name type="ordered locus">Mthe_0545</name>
</gene>
<reference key="1">
    <citation type="submission" date="2006-10" db="EMBL/GenBank/DDBJ databases">
        <title>Complete sequence of Methanosaeta thermophila PT.</title>
        <authorList>
            <consortium name="US DOE Joint Genome Institute"/>
            <person name="Copeland A."/>
            <person name="Lucas S."/>
            <person name="Lapidus A."/>
            <person name="Barry K."/>
            <person name="Detter J.C."/>
            <person name="Glavina del Rio T."/>
            <person name="Hammon N."/>
            <person name="Israni S."/>
            <person name="Pitluck S."/>
            <person name="Chain P."/>
            <person name="Malfatti S."/>
            <person name="Shin M."/>
            <person name="Vergez L."/>
            <person name="Schmutz J."/>
            <person name="Larimer F."/>
            <person name="Land M."/>
            <person name="Hauser L."/>
            <person name="Kyrpides N."/>
            <person name="Kim E."/>
            <person name="Smith K.S."/>
            <person name="Ingram-Smith C."/>
            <person name="Richardson P."/>
        </authorList>
    </citation>
    <scope>NUCLEOTIDE SEQUENCE [LARGE SCALE GENOMIC DNA]</scope>
    <source>
        <strain>DSM 6194 / JCM 14653 / NBRC 101360 / PT</strain>
    </source>
</reference>